<comment type="function">
    <text evidence="1">Catalyzes the conversion of dihydroorotate to orotate with quinone as electron acceptor.</text>
</comment>
<comment type="catalytic activity">
    <reaction evidence="1">
        <text>(S)-dihydroorotate + a quinone = orotate + a quinol</text>
        <dbReference type="Rhea" id="RHEA:30187"/>
        <dbReference type="ChEBI" id="CHEBI:24646"/>
        <dbReference type="ChEBI" id="CHEBI:30839"/>
        <dbReference type="ChEBI" id="CHEBI:30864"/>
        <dbReference type="ChEBI" id="CHEBI:132124"/>
        <dbReference type="EC" id="1.3.5.2"/>
    </reaction>
</comment>
<comment type="cofactor">
    <cofactor evidence="1">
        <name>FMN</name>
        <dbReference type="ChEBI" id="CHEBI:58210"/>
    </cofactor>
    <text evidence="1">Binds 1 FMN per subunit.</text>
</comment>
<comment type="pathway">
    <text evidence="1">Pyrimidine metabolism; UMP biosynthesis via de novo pathway; orotate from (S)-dihydroorotate (quinone route): step 1/1.</text>
</comment>
<comment type="subunit">
    <text evidence="1">Monomer.</text>
</comment>
<comment type="subcellular location">
    <subcellularLocation>
        <location evidence="1">Cell membrane</location>
        <topology evidence="1">Peripheral membrane protein</topology>
    </subcellularLocation>
</comment>
<comment type="similarity">
    <text evidence="1">Belongs to the dihydroorotate dehydrogenase family. Type 2 subfamily.</text>
</comment>
<keyword id="KW-1003">Cell membrane</keyword>
<keyword id="KW-0285">Flavoprotein</keyword>
<keyword id="KW-0288">FMN</keyword>
<keyword id="KW-0472">Membrane</keyword>
<keyword id="KW-0560">Oxidoreductase</keyword>
<keyword id="KW-0665">Pyrimidine biosynthesis</keyword>
<name>PYRD_PECCP</name>
<protein>
    <recommendedName>
        <fullName evidence="1">Dihydroorotate dehydrogenase (quinone)</fullName>
        <ecNumber evidence="1">1.3.5.2</ecNumber>
    </recommendedName>
    <alternativeName>
        <fullName evidence="1">DHOdehase</fullName>
        <shortName evidence="1">DHOD</shortName>
        <shortName evidence="1">DHODase</shortName>
    </alternativeName>
    <alternativeName>
        <fullName evidence="1">Dihydroorotate oxidase</fullName>
    </alternativeName>
</protein>
<evidence type="ECO:0000255" key="1">
    <source>
        <dbReference type="HAMAP-Rule" id="MF_00225"/>
    </source>
</evidence>
<organism>
    <name type="scientific">Pectobacterium carotovorum subsp. carotovorum (strain PC1)</name>
    <dbReference type="NCBI Taxonomy" id="561230"/>
    <lineage>
        <taxon>Bacteria</taxon>
        <taxon>Pseudomonadati</taxon>
        <taxon>Pseudomonadota</taxon>
        <taxon>Gammaproteobacteria</taxon>
        <taxon>Enterobacterales</taxon>
        <taxon>Pectobacteriaceae</taxon>
        <taxon>Pectobacterium</taxon>
    </lineage>
</organism>
<reference key="1">
    <citation type="submission" date="2009-07" db="EMBL/GenBank/DDBJ databases">
        <title>Complete sequence of Pectobacterium carotovorum subsp. carotovorum PC1.</title>
        <authorList>
            <consortium name="US DOE Joint Genome Institute"/>
            <person name="Lucas S."/>
            <person name="Copeland A."/>
            <person name="Lapidus A."/>
            <person name="Glavina del Rio T."/>
            <person name="Tice H."/>
            <person name="Bruce D."/>
            <person name="Goodwin L."/>
            <person name="Pitluck S."/>
            <person name="Munk A.C."/>
            <person name="Brettin T."/>
            <person name="Detter J.C."/>
            <person name="Han C."/>
            <person name="Tapia R."/>
            <person name="Larimer F."/>
            <person name="Land M."/>
            <person name="Hauser L."/>
            <person name="Kyrpides N."/>
            <person name="Mikhailova N."/>
            <person name="Balakrishnan V."/>
            <person name="Glasner J."/>
            <person name="Perna N.T."/>
        </authorList>
    </citation>
    <scope>NUCLEOTIDE SEQUENCE [LARGE SCALE GENOMIC DNA]</scope>
    <source>
        <strain>PC1</strain>
    </source>
</reference>
<dbReference type="EC" id="1.3.5.2" evidence="1"/>
<dbReference type="EMBL" id="CP001657">
    <property type="protein sequence ID" value="ACT12829.1"/>
    <property type="molecule type" value="Genomic_DNA"/>
</dbReference>
<dbReference type="RefSeq" id="WP_015840036.1">
    <property type="nucleotide sequence ID" value="NC_012917.1"/>
</dbReference>
<dbReference type="SMR" id="C6DFC0"/>
<dbReference type="STRING" id="561230.PC1_1788"/>
<dbReference type="KEGG" id="pct:PC1_1788"/>
<dbReference type="eggNOG" id="COG0167">
    <property type="taxonomic scope" value="Bacteria"/>
</dbReference>
<dbReference type="HOGENOM" id="CLU_013640_2_0_6"/>
<dbReference type="OrthoDB" id="9802377at2"/>
<dbReference type="UniPathway" id="UPA00070">
    <property type="reaction ID" value="UER00946"/>
</dbReference>
<dbReference type="Proteomes" id="UP000002736">
    <property type="component" value="Chromosome"/>
</dbReference>
<dbReference type="GO" id="GO:0005737">
    <property type="term" value="C:cytoplasm"/>
    <property type="evidence" value="ECO:0007669"/>
    <property type="project" value="InterPro"/>
</dbReference>
<dbReference type="GO" id="GO:0005886">
    <property type="term" value="C:plasma membrane"/>
    <property type="evidence" value="ECO:0007669"/>
    <property type="project" value="UniProtKB-SubCell"/>
</dbReference>
<dbReference type="GO" id="GO:0106430">
    <property type="term" value="F:dihydroorotate dehydrogenase (quinone) activity"/>
    <property type="evidence" value="ECO:0007669"/>
    <property type="project" value="UniProtKB-EC"/>
</dbReference>
<dbReference type="GO" id="GO:0006207">
    <property type="term" value="P:'de novo' pyrimidine nucleobase biosynthetic process"/>
    <property type="evidence" value="ECO:0007669"/>
    <property type="project" value="InterPro"/>
</dbReference>
<dbReference type="GO" id="GO:0044205">
    <property type="term" value="P:'de novo' UMP biosynthetic process"/>
    <property type="evidence" value="ECO:0007669"/>
    <property type="project" value="UniProtKB-UniRule"/>
</dbReference>
<dbReference type="CDD" id="cd04738">
    <property type="entry name" value="DHOD_2_like"/>
    <property type="match status" value="1"/>
</dbReference>
<dbReference type="FunFam" id="3.20.20.70:FF:000028">
    <property type="entry name" value="Dihydroorotate dehydrogenase (quinone)"/>
    <property type="match status" value="1"/>
</dbReference>
<dbReference type="Gene3D" id="3.20.20.70">
    <property type="entry name" value="Aldolase class I"/>
    <property type="match status" value="1"/>
</dbReference>
<dbReference type="HAMAP" id="MF_00225">
    <property type="entry name" value="DHO_dh_type2"/>
    <property type="match status" value="1"/>
</dbReference>
<dbReference type="InterPro" id="IPR013785">
    <property type="entry name" value="Aldolase_TIM"/>
</dbReference>
<dbReference type="InterPro" id="IPR050074">
    <property type="entry name" value="DHO_dehydrogenase"/>
</dbReference>
<dbReference type="InterPro" id="IPR012135">
    <property type="entry name" value="Dihydroorotate_DH_1_2"/>
</dbReference>
<dbReference type="InterPro" id="IPR005719">
    <property type="entry name" value="Dihydroorotate_DH_2"/>
</dbReference>
<dbReference type="InterPro" id="IPR005720">
    <property type="entry name" value="Dihydroorotate_DH_cat"/>
</dbReference>
<dbReference type="InterPro" id="IPR001295">
    <property type="entry name" value="Dihydroorotate_DH_CS"/>
</dbReference>
<dbReference type="NCBIfam" id="NF003644">
    <property type="entry name" value="PRK05286.1-1"/>
    <property type="match status" value="1"/>
</dbReference>
<dbReference type="NCBIfam" id="NF003645">
    <property type="entry name" value="PRK05286.1-2"/>
    <property type="match status" value="1"/>
</dbReference>
<dbReference type="NCBIfam" id="NF003646">
    <property type="entry name" value="PRK05286.1-4"/>
    <property type="match status" value="1"/>
</dbReference>
<dbReference type="NCBIfam" id="NF003652">
    <property type="entry name" value="PRK05286.2-5"/>
    <property type="match status" value="1"/>
</dbReference>
<dbReference type="NCBIfam" id="TIGR01036">
    <property type="entry name" value="pyrD_sub2"/>
    <property type="match status" value="1"/>
</dbReference>
<dbReference type="PANTHER" id="PTHR48109:SF4">
    <property type="entry name" value="DIHYDROOROTATE DEHYDROGENASE (QUINONE), MITOCHONDRIAL"/>
    <property type="match status" value="1"/>
</dbReference>
<dbReference type="PANTHER" id="PTHR48109">
    <property type="entry name" value="DIHYDROOROTATE DEHYDROGENASE (QUINONE), MITOCHONDRIAL-RELATED"/>
    <property type="match status" value="1"/>
</dbReference>
<dbReference type="Pfam" id="PF01180">
    <property type="entry name" value="DHO_dh"/>
    <property type="match status" value="1"/>
</dbReference>
<dbReference type="PIRSF" id="PIRSF000164">
    <property type="entry name" value="DHO_oxidase"/>
    <property type="match status" value="1"/>
</dbReference>
<dbReference type="SUPFAM" id="SSF51395">
    <property type="entry name" value="FMN-linked oxidoreductases"/>
    <property type="match status" value="1"/>
</dbReference>
<dbReference type="PROSITE" id="PS00911">
    <property type="entry name" value="DHODEHASE_1"/>
    <property type="match status" value="1"/>
</dbReference>
<dbReference type="PROSITE" id="PS00912">
    <property type="entry name" value="DHODEHASE_2"/>
    <property type="match status" value="1"/>
</dbReference>
<proteinExistence type="inferred from homology"/>
<feature type="chain" id="PRO_1000204317" description="Dihydroorotate dehydrogenase (quinone)">
    <location>
        <begin position="1"/>
        <end position="336"/>
    </location>
</feature>
<feature type="active site" description="Nucleophile" evidence="1">
    <location>
        <position position="175"/>
    </location>
</feature>
<feature type="binding site" evidence="1">
    <location>
        <begin position="62"/>
        <end position="66"/>
    </location>
    <ligand>
        <name>FMN</name>
        <dbReference type="ChEBI" id="CHEBI:58210"/>
    </ligand>
</feature>
<feature type="binding site" evidence="1">
    <location>
        <position position="66"/>
    </location>
    <ligand>
        <name>substrate</name>
    </ligand>
</feature>
<feature type="binding site" evidence="1">
    <location>
        <position position="86"/>
    </location>
    <ligand>
        <name>FMN</name>
        <dbReference type="ChEBI" id="CHEBI:58210"/>
    </ligand>
</feature>
<feature type="binding site" evidence="1">
    <location>
        <begin position="111"/>
        <end position="115"/>
    </location>
    <ligand>
        <name>substrate</name>
    </ligand>
</feature>
<feature type="binding site" evidence="1">
    <location>
        <position position="139"/>
    </location>
    <ligand>
        <name>FMN</name>
        <dbReference type="ChEBI" id="CHEBI:58210"/>
    </ligand>
</feature>
<feature type="binding site" evidence="1">
    <location>
        <position position="172"/>
    </location>
    <ligand>
        <name>FMN</name>
        <dbReference type="ChEBI" id="CHEBI:58210"/>
    </ligand>
</feature>
<feature type="binding site" evidence="1">
    <location>
        <position position="172"/>
    </location>
    <ligand>
        <name>substrate</name>
    </ligand>
</feature>
<feature type="binding site" evidence="1">
    <location>
        <position position="177"/>
    </location>
    <ligand>
        <name>substrate</name>
    </ligand>
</feature>
<feature type="binding site" evidence="1">
    <location>
        <position position="217"/>
    </location>
    <ligand>
        <name>FMN</name>
        <dbReference type="ChEBI" id="CHEBI:58210"/>
    </ligand>
</feature>
<feature type="binding site" evidence="1">
    <location>
        <position position="245"/>
    </location>
    <ligand>
        <name>FMN</name>
        <dbReference type="ChEBI" id="CHEBI:58210"/>
    </ligand>
</feature>
<feature type="binding site" evidence="1">
    <location>
        <begin position="246"/>
        <end position="247"/>
    </location>
    <ligand>
        <name>substrate</name>
    </ligand>
</feature>
<feature type="binding site" evidence="1">
    <location>
        <position position="268"/>
    </location>
    <ligand>
        <name>FMN</name>
        <dbReference type="ChEBI" id="CHEBI:58210"/>
    </ligand>
</feature>
<feature type="binding site" evidence="1">
    <location>
        <position position="297"/>
    </location>
    <ligand>
        <name>FMN</name>
        <dbReference type="ChEBI" id="CHEBI:58210"/>
    </ligand>
</feature>
<feature type="binding site" evidence="1">
    <location>
        <begin position="318"/>
        <end position="319"/>
    </location>
    <ligand>
        <name>FMN</name>
        <dbReference type="ChEBI" id="CHEBI:58210"/>
    </ligand>
</feature>
<gene>
    <name evidence="1" type="primary">pyrD</name>
    <name type="ordered locus">PC1_1788</name>
</gene>
<accession>C6DFC0</accession>
<sequence>MFYPVIKKALFQLDPERAHELTFQQLRRITNTPFEFLVRQSVPTKPVTCMGLSFKNPLGLAAGLDKDGECIDALGAMGFGFIEVGTVTPRPQSGNDKPRLFRVVEAEGLINRMGFNNKGVDSLVENVKKTRFGGVLGINIGKNKDTPVEQGKDDYLICMDKVYAHAGYIAINISSPNTPGLRSLQYGEALDDLLLAIKNKQAELKERHQKYVPVAVKIAPDLSEEELIQIADSLVRHNIDGVIATNTTLDRKLIQGLNHCGQTGGLSGRPLQTSSTEIIRRLSQELAGRLPIIGVGGIDSLVAAREKMAAGASLVQIYSGFIFHGPRLIKDIVTHI</sequence>